<evidence type="ECO:0000255" key="1">
    <source>
        <dbReference type="HAMAP-Rule" id="MF_01522"/>
    </source>
</evidence>
<reference key="1">
    <citation type="journal article" date="2007" name="Appl. Environ. Microbiol.">
        <title>Genome sequence of the cellulolytic gliding bacterium Cytophaga hutchinsonii.</title>
        <authorList>
            <person name="Xie G."/>
            <person name="Bruce D.C."/>
            <person name="Challacombe J.F."/>
            <person name="Chertkov O."/>
            <person name="Detter J.C."/>
            <person name="Gilna P."/>
            <person name="Han C.S."/>
            <person name="Lucas S."/>
            <person name="Misra M."/>
            <person name="Myers G.L."/>
            <person name="Richardson P."/>
            <person name="Tapia R."/>
            <person name="Thayer N."/>
            <person name="Thompson L.S."/>
            <person name="Brettin T.S."/>
            <person name="Henrissat B."/>
            <person name="Wilson D.B."/>
            <person name="McBride M.J."/>
        </authorList>
    </citation>
    <scope>NUCLEOTIDE SEQUENCE [LARGE SCALE GENOMIC DNA]</scope>
    <source>
        <strain>ATCC 33406 / DSM 1761 / JCM 20678 / CIP 103989 / IAM 12607 / NBRC 15051 / NCIMB 9469 / D465</strain>
    </source>
</reference>
<name>KUP_CYTH3</name>
<organism>
    <name type="scientific">Cytophaga hutchinsonii (strain ATCC 33406 / DSM 1761 / CIP 103989 / NBRC 15051 / NCIMB 9469 / D465)</name>
    <dbReference type="NCBI Taxonomy" id="269798"/>
    <lineage>
        <taxon>Bacteria</taxon>
        <taxon>Pseudomonadati</taxon>
        <taxon>Bacteroidota</taxon>
        <taxon>Cytophagia</taxon>
        <taxon>Cytophagales</taxon>
        <taxon>Cytophagaceae</taxon>
        <taxon>Cytophaga</taxon>
    </lineage>
</organism>
<comment type="function">
    <text evidence="1">Transport of potassium into the cell. Likely operates as a K(+):H(+) symporter.</text>
</comment>
<comment type="catalytic activity">
    <reaction evidence="1">
        <text>K(+)(in) + H(+)(in) = K(+)(out) + H(+)(out)</text>
        <dbReference type="Rhea" id="RHEA:28490"/>
        <dbReference type="ChEBI" id="CHEBI:15378"/>
        <dbReference type="ChEBI" id="CHEBI:29103"/>
    </reaction>
    <physiologicalReaction direction="right-to-left" evidence="1">
        <dbReference type="Rhea" id="RHEA:28492"/>
    </physiologicalReaction>
</comment>
<comment type="subcellular location">
    <subcellularLocation>
        <location evidence="1">Cell inner membrane</location>
        <topology evidence="1">Multi-pass membrane protein</topology>
    </subcellularLocation>
</comment>
<comment type="similarity">
    <text evidence="1">Belongs to the HAK/KUP transporter (TC 2.A.72) family.</text>
</comment>
<feature type="chain" id="PRO_0000279780" description="Probable potassium transport system protein Kup">
    <location>
        <begin position="1"/>
        <end position="655"/>
    </location>
</feature>
<feature type="transmembrane region" description="Helical" evidence="1">
    <location>
        <begin position="19"/>
        <end position="39"/>
    </location>
</feature>
<feature type="transmembrane region" description="Helical" evidence="1">
    <location>
        <begin position="42"/>
        <end position="62"/>
    </location>
</feature>
<feature type="transmembrane region" description="Helical" evidence="1">
    <location>
        <begin position="102"/>
        <end position="122"/>
    </location>
</feature>
<feature type="transmembrane region" description="Helical" evidence="1">
    <location>
        <begin position="132"/>
        <end position="152"/>
    </location>
</feature>
<feature type="transmembrane region" description="Helical" evidence="1">
    <location>
        <begin position="161"/>
        <end position="181"/>
    </location>
</feature>
<feature type="transmembrane region" description="Helical" evidence="1">
    <location>
        <begin position="214"/>
        <end position="234"/>
    </location>
</feature>
<feature type="transmembrane region" description="Helical" evidence="1">
    <location>
        <begin position="246"/>
        <end position="266"/>
    </location>
</feature>
<feature type="transmembrane region" description="Helical" evidence="1">
    <location>
        <begin position="282"/>
        <end position="302"/>
    </location>
</feature>
<feature type="transmembrane region" description="Helical" evidence="1">
    <location>
        <begin position="338"/>
        <end position="358"/>
    </location>
</feature>
<feature type="transmembrane region" description="Helical" evidence="1">
    <location>
        <begin position="370"/>
        <end position="390"/>
    </location>
</feature>
<feature type="transmembrane region" description="Helical" evidence="1">
    <location>
        <begin position="395"/>
        <end position="415"/>
    </location>
</feature>
<feature type="transmembrane region" description="Helical" evidence="1">
    <location>
        <begin position="420"/>
        <end position="440"/>
    </location>
</feature>
<proteinExistence type="inferred from homology"/>
<accession>Q11PK1</accession>
<sequence>MSTIADSKNHGHQKLTAAGLLISLGIIYGDIGTSPLYVMKAIAGGNVISENLILGGLSCVFWTITLQTTIKYVIITLRADNKGEGGIFSLFALIRRRNPNLVWPAMIGGAAMLADGIITPPISVSSAVEGLLIFNKDIPTIPIVLAIIVMLFMIQRFGTNIVGKFFGPIMFIWFAMLATLGLSQLMGNFYVLKAINPMYAFNLLTQYTTVDDKSGFWLLGAVFLCTTGAEALYSDLGHCGRPNIRISWIFVKLALLINYFGQGAWILQNKGYVIKGNPFFGIMPEWFIVYGIIIATMAAIIASQAMISGSYTLISEALRLNLWPKVRVKYPSVKKGQLFIPSINLLLLAGCIFVVLWFGESSAMEGAYGLAINITFLMTTILLAYYLLIIKRISFIWVGLLILMYLIIEVSFLVANLEKFFHGGYFTLISSGILAFIMIIWYTAHRIKRRLTEYVKIQDYFPLIKELSEDTSIPKYSTHLIYLTGADNYTQIESKVIYSIFQKQPKRADIYWFLHIDVVDEPYTMEYKVRTMLADDVIRIDFKLGFRVEHRINLFFRKVVEDMVNNKEVDFTSRYTSLNKRNVIGDFRFVVLEKHLSNDNDLSVMEQFAMDWYFFLKHISISESSAFGLDTSSVTVEKVPMVISPMEAFQLKRVY</sequence>
<keyword id="KW-0997">Cell inner membrane</keyword>
<keyword id="KW-1003">Cell membrane</keyword>
<keyword id="KW-0406">Ion transport</keyword>
<keyword id="KW-0472">Membrane</keyword>
<keyword id="KW-0630">Potassium</keyword>
<keyword id="KW-0633">Potassium transport</keyword>
<keyword id="KW-1185">Reference proteome</keyword>
<keyword id="KW-0769">Symport</keyword>
<keyword id="KW-0812">Transmembrane</keyword>
<keyword id="KW-1133">Transmembrane helix</keyword>
<keyword id="KW-0813">Transport</keyword>
<dbReference type="EMBL" id="CP000383">
    <property type="protein sequence ID" value="ABG60662.1"/>
    <property type="molecule type" value="Genomic_DNA"/>
</dbReference>
<dbReference type="RefSeq" id="WP_011586769.1">
    <property type="nucleotide sequence ID" value="NC_008255.1"/>
</dbReference>
<dbReference type="STRING" id="269798.CHU_3426"/>
<dbReference type="KEGG" id="chu:CHU_3426"/>
<dbReference type="eggNOG" id="COG3158">
    <property type="taxonomic scope" value="Bacteria"/>
</dbReference>
<dbReference type="HOGENOM" id="CLU_008142_4_1_10"/>
<dbReference type="OrthoDB" id="9805577at2"/>
<dbReference type="Proteomes" id="UP000001822">
    <property type="component" value="Chromosome"/>
</dbReference>
<dbReference type="GO" id="GO:0005886">
    <property type="term" value="C:plasma membrane"/>
    <property type="evidence" value="ECO:0007669"/>
    <property type="project" value="UniProtKB-SubCell"/>
</dbReference>
<dbReference type="GO" id="GO:0015079">
    <property type="term" value="F:potassium ion transmembrane transporter activity"/>
    <property type="evidence" value="ECO:0007669"/>
    <property type="project" value="UniProtKB-UniRule"/>
</dbReference>
<dbReference type="GO" id="GO:0015293">
    <property type="term" value="F:symporter activity"/>
    <property type="evidence" value="ECO:0007669"/>
    <property type="project" value="UniProtKB-UniRule"/>
</dbReference>
<dbReference type="HAMAP" id="MF_01522">
    <property type="entry name" value="Kup"/>
    <property type="match status" value="1"/>
</dbReference>
<dbReference type="InterPro" id="IPR003855">
    <property type="entry name" value="K+_transporter"/>
</dbReference>
<dbReference type="InterPro" id="IPR053952">
    <property type="entry name" value="K_trans_C"/>
</dbReference>
<dbReference type="InterPro" id="IPR053951">
    <property type="entry name" value="K_trans_N"/>
</dbReference>
<dbReference type="InterPro" id="IPR023051">
    <property type="entry name" value="Kup"/>
</dbReference>
<dbReference type="PANTHER" id="PTHR30540:SF83">
    <property type="entry name" value="K+ POTASSIUM TRANSPORTER"/>
    <property type="match status" value="1"/>
</dbReference>
<dbReference type="PANTHER" id="PTHR30540">
    <property type="entry name" value="OSMOTIC STRESS POTASSIUM TRANSPORTER"/>
    <property type="match status" value="1"/>
</dbReference>
<dbReference type="Pfam" id="PF02705">
    <property type="entry name" value="K_trans"/>
    <property type="match status" value="1"/>
</dbReference>
<dbReference type="Pfam" id="PF22776">
    <property type="entry name" value="K_trans_C"/>
    <property type="match status" value="1"/>
</dbReference>
<protein>
    <recommendedName>
        <fullName evidence="1">Probable potassium transport system protein Kup</fullName>
    </recommendedName>
</protein>
<gene>
    <name evidence="1" type="primary">kup</name>
    <name type="ordered locus">CHU_3426</name>
</gene>